<organism>
    <name type="scientific">Mycobacterium tuberculosis (strain ATCC 25177 / H37Ra)</name>
    <dbReference type="NCBI Taxonomy" id="419947"/>
    <lineage>
        <taxon>Bacteria</taxon>
        <taxon>Bacillati</taxon>
        <taxon>Actinomycetota</taxon>
        <taxon>Actinomycetes</taxon>
        <taxon>Mycobacteriales</taxon>
        <taxon>Mycobacteriaceae</taxon>
        <taxon>Mycobacterium</taxon>
        <taxon>Mycobacterium tuberculosis complex</taxon>
    </lineage>
</organism>
<evidence type="ECO:0000255" key="1">
    <source>
        <dbReference type="HAMAP-Rule" id="MF_00456"/>
    </source>
</evidence>
<reference key="1">
    <citation type="journal article" date="2008" name="PLoS ONE">
        <title>Genetic basis of virulence attenuation revealed by comparative genomic analysis of Mycobacterium tuberculosis strain H37Ra versus H37Rv.</title>
        <authorList>
            <person name="Zheng H."/>
            <person name="Lu L."/>
            <person name="Wang B."/>
            <person name="Pu S."/>
            <person name="Zhang X."/>
            <person name="Zhu G."/>
            <person name="Shi W."/>
            <person name="Zhang L."/>
            <person name="Wang H."/>
            <person name="Wang S."/>
            <person name="Zhao G."/>
            <person name="Zhang Y."/>
        </authorList>
    </citation>
    <scope>NUCLEOTIDE SEQUENCE [LARGE SCALE GENOMIC DNA]</scope>
    <source>
        <strain>ATCC 25177 / H37Ra</strain>
    </source>
</reference>
<gene>
    <name evidence="1" type="primary">proB</name>
    <name type="ordered locus">MRA_2465</name>
</gene>
<dbReference type="EC" id="2.7.2.11" evidence="1"/>
<dbReference type="EMBL" id="CP000611">
    <property type="protein sequence ID" value="ABQ74235.1"/>
    <property type="molecule type" value="Genomic_DNA"/>
</dbReference>
<dbReference type="RefSeq" id="WP_003906819.1">
    <property type="nucleotide sequence ID" value="NZ_CP016972.1"/>
</dbReference>
<dbReference type="SMR" id="A5U5D5"/>
<dbReference type="KEGG" id="mra:MRA_2465"/>
<dbReference type="eggNOG" id="COG0263">
    <property type="taxonomic scope" value="Bacteria"/>
</dbReference>
<dbReference type="HOGENOM" id="CLU_025400_2_0_11"/>
<dbReference type="UniPathway" id="UPA00098">
    <property type="reaction ID" value="UER00359"/>
</dbReference>
<dbReference type="Proteomes" id="UP000001988">
    <property type="component" value="Chromosome"/>
</dbReference>
<dbReference type="GO" id="GO:0005829">
    <property type="term" value="C:cytosol"/>
    <property type="evidence" value="ECO:0007669"/>
    <property type="project" value="TreeGrafter"/>
</dbReference>
<dbReference type="GO" id="GO:0005524">
    <property type="term" value="F:ATP binding"/>
    <property type="evidence" value="ECO:0007669"/>
    <property type="project" value="UniProtKB-KW"/>
</dbReference>
<dbReference type="GO" id="GO:0004349">
    <property type="term" value="F:glutamate 5-kinase activity"/>
    <property type="evidence" value="ECO:0007669"/>
    <property type="project" value="UniProtKB-UniRule"/>
</dbReference>
<dbReference type="GO" id="GO:0003723">
    <property type="term" value="F:RNA binding"/>
    <property type="evidence" value="ECO:0007669"/>
    <property type="project" value="InterPro"/>
</dbReference>
<dbReference type="GO" id="GO:0055129">
    <property type="term" value="P:L-proline biosynthetic process"/>
    <property type="evidence" value="ECO:0007669"/>
    <property type="project" value="UniProtKB-UniRule"/>
</dbReference>
<dbReference type="CDD" id="cd04242">
    <property type="entry name" value="AAK_G5K_ProB"/>
    <property type="match status" value="1"/>
</dbReference>
<dbReference type="CDD" id="cd21157">
    <property type="entry name" value="PUA_G5K"/>
    <property type="match status" value="1"/>
</dbReference>
<dbReference type="FunFam" id="3.40.1160.10:FF:000018">
    <property type="entry name" value="Glutamate 5-kinase"/>
    <property type="match status" value="1"/>
</dbReference>
<dbReference type="Gene3D" id="3.40.1160.10">
    <property type="entry name" value="Acetylglutamate kinase-like"/>
    <property type="match status" value="1"/>
</dbReference>
<dbReference type="Gene3D" id="2.30.130.10">
    <property type="entry name" value="PUA domain"/>
    <property type="match status" value="1"/>
</dbReference>
<dbReference type="HAMAP" id="MF_00456">
    <property type="entry name" value="ProB"/>
    <property type="match status" value="1"/>
</dbReference>
<dbReference type="InterPro" id="IPR036393">
    <property type="entry name" value="AceGlu_kinase-like_sf"/>
</dbReference>
<dbReference type="InterPro" id="IPR001048">
    <property type="entry name" value="Asp/Glu/Uridylate_kinase"/>
</dbReference>
<dbReference type="InterPro" id="IPR041739">
    <property type="entry name" value="G5K_ProB"/>
</dbReference>
<dbReference type="InterPro" id="IPR001057">
    <property type="entry name" value="Glu/AcGlu_kinase"/>
</dbReference>
<dbReference type="InterPro" id="IPR011529">
    <property type="entry name" value="Glu_5kinase"/>
</dbReference>
<dbReference type="InterPro" id="IPR005715">
    <property type="entry name" value="Glu_5kinase/COase_Synthase"/>
</dbReference>
<dbReference type="InterPro" id="IPR019797">
    <property type="entry name" value="Glutamate_5-kinase_CS"/>
</dbReference>
<dbReference type="InterPro" id="IPR002478">
    <property type="entry name" value="PUA"/>
</dbReference>
<dbReference type="InterPro" id="IPR015947">
    <property type="entry name" value="PUA-like_sf"/>
</dbReference>
<dbReference type="InterPro" id="IPR036974">
    <property type="entry name" value="PUA_sf"/>
</dbReference>
<dbReference type="NCBIfam" id="TIGR01027">
    <property type="entry name" value="proB"/>
    <property type="match status" value="1"/>
</dbReference>
<dbReference type="PANTHER" id="PTHR43654">
    <property type="entry name" value="GLUTAMATE 5-KINASE"/>
    <property type="match status" value="1"/>
</dbReference>
<dbReference type="PANTHER" id="PTHR43654:SF1">
    <property type="entry name" value="ISOPENTENYL PHOSPHATE KINASE"/>
    <property type="match status" value="1"/>
</dbReference>
<dbReference type="Pfam" id="PF00696">
    <property type="entry name" value="AA_kinase"/>
    <property type="match status" value="1"/>
</dbReference>
<dbReference type="Pfam" id="PF01472">
    <property type="entry name" value="PUA"/>
    <property type="match status" value="1"/>
</dbReference>
<dbReference type="PIRSF" id="PIRSF000729">
    <property type="entry name" value="GK"/>
    <property type="match status" value="1"/>
</dbReference>
<dbReference type="PRINTS" id="PR00474">
    <property type="entry name" value="GLU5KINASE"/>
</dbReference>
<dbReference type="SMART" id="SM00359">
    <property type="entry name" value="PUA"/>
    <property type="match status" value="1"/>
</dbReference>
<dbReference type="SUPFAM" id="SSF53633">
    <property type="entry name" value="Carbamate kinase-like"/>
    <property type="match status" value="1"/>
</dbReference>
<dbReference type="SUPFAM" id="SSF88697">
    <property type="entry name" value="PUA domain-like"/>
    <property type="match status" value="1"/>
</dbReference>
<dbReference type="PROSITE" id="PS00902">
    <property type="entry name" value="GLUTAMATE_5_KINASE"/>
    <property type="match status" value="1"/>
</dbReference>
<dbReference type="PROSITE" id="PS50890">
    <property type="entry name" value="PUA"/>
    <property type="match status" value="1"/>
</dbReference>
<sequence>MRSPHRDAIRTARGLVVKVGTTALTTPSGMFDAGRLAGLAEAVERRMKAGSDVVIVSSGAIAAGIEPLGLSRRPKDLATKQAAASVGQVALVNSWSAAFARYGRTVGQVLLTAHDISMRVQHTNAQRTLDRLRALHAVAIVNENDTVATNEIRFGDNDRLSALVAHLVGADALVLLSDIDGLYDCDPRKTADATFIPEVSGPADLDGVVAGRSSHLGTGGMASKVAAALLAADAGVPVLLAPAADAATALADASVGTVFAARPARLSARRFWVRYAAEATGALTLDAGAVRAVVRQRRSLLAAGITAVSGRFCGGDVVELRAPDAAMVARGVVAYDASELATMVGRSTSELPGELRRPVVHADDLVAVSAKQAKQV</sequence>
<accession>A5U5D5</accession>
<name>PROB_MYCTA</name>
<comment type="function">
    <text evidence="1">Catalyzes the transfer of a phosphate group to glutamate to form L-glutamate 5-phosphate.</text>
</comment>
<comment type="catalytic activity">
    <reaction evidence="1">
        <text>L-glutamate + ATP = L-glutamyl 5-phosphate + ADP</text>
        <dbReference type="Rhea" id="RHEA:14877"/>
        <dbReference type="ChEBI" id="CHEBI:29985"/>
        <dbReference type="ChEBI" id="CHEBI:30616"/>
        <dbReference type="ChEBI" id="CHEBI:58274"/>
        <dbReference type="ChEBI" id="CHEBI:456216"/>
        <dbReference type="EC" id="2.7.2.11"/>
    </reaction>
</comment>
<comment type="pathway">
    <text evidence="1">Amino-acid biosynthesis; L-proline biosynthesis; L-glutamate 5-semialdehyde from L-glutamate: step 1/2.</text>
</comment>
<comment type="subcellular location">
    <subcellularLocation>
        <location evidence="1">Cytoplasm</location>
    </subcellularLocation>
</comment>
<comment type="similarity">
    <text evidence="1">Belongs to the glutamate 5-kinase family.</text>
</comment>
<keyword id="KW-0028">Amino-acid biosynthesis</keyword>
<keyword id="KW-0067">ATP-binding</keyword>
<keyword id="KW-0963">Cytoplasm</keyword>
<keyword id="KW-0418">Kinase</keyword>
<keyword id="KW-0547">Nucleotide-binding</keyword>
<keyword id="KW-0641">Proline biosynthesis</keyword>
<keyword id="KW-1185">Reference proteome</keyword>
<keyword id="KW-0808">Transferase</keyword>
<feature type="chain" id="PRO_1000081077" description="Glutamate 5-kinase">
    <location>
        <begin position="1"/>
        <end position="376"/>
    </location>
</feature>
<feature type="domain" description="PUA" evidence="1">
    <location>
        <begin position="280"/>
        <end position="358"/>
    </location>
</feature>
<feature type="binding site" evidence="1">
    <location>
        <position position="18"/>
    </location>
    <ligand>
        <name>ATP</name>
        <dbReference type="ChEBI" id="CHEBI:30616"/>
    </ligand>
</feature>
<feature type="binding site" evidence="1">
    <location>
        <position position="58"/>
    </location>
    <ligand>
        <name>substrate</name>
    </ligand>
</feature>
<feature type="binding site" evidence="1">
    <location>
        <position position="145"/>
    </location>
    <ligand>
        <name>substrate</name>
    </ligand>
</feature>
<feature type="binding site" evidence="1">
    <location>
        <position position="157"/>
    </location>
    <ligand>
        <name>substrate</name>
    </ligand>
</feature>
<feature type="binding site" evidence="1">
    <location>
        <begin position="177"/>
        <end position="178"/>
    </location>
    <ligand>
        <name>ATP</name>
        <dbReference type="ChEBI" id="CHEBI:30616"/>
    </ligand>
</feature>
<feature type="binding site" evidence="1">
    <location>
        <begin position="218"/>
        <end position="224"/>
    </location>
    <ligand>
        <name>ATP</name>
        <dbReference type="ChEBI" id="CHEBI:30616"/>
    </ligand>
</feature>
<proteinExistence type="inferred from homology"/>
<protein>
    <recommendedName>
        <fullName evidence="1">Glutamate 5-kinase</fullName>
        <ecNumber evidence="1">2.7.2.11</ecNumber>
    </recommendedName>
    <alternativeName>
        <fullName evidence="1">Gamma-glutamyl kinase</fullName>
        <shortName evidence="1">GK</shortName>
    </alternativeName>
</protein>